<name>TAL_LACP7</name>
<comment type="function">
    <text evidence="1">Transaldolase is important for the balance of metabolites in the pentose-phosphate pathway.</text>
</comment>
<comment type="catalytic activity">
    <reaction evidence="1">
        <text>D-sedoheptulose 7-phosphate + D-glyceraldehyde 3-phosphate = D-erythrose 4-phosphate + beta-D-fructose 6-phosphate</text>
        <dbReference type="Rhea" id="RHEA:17053"/>
        <dbReference type="ChEBI" id="CHEBI:16897"/>
        <dbReference type="ChEBI" id="CHEBI:57483"/>
        <dbReference type="ChEBI" id="CHEBI:57634"/>
        <dbReference type="ChEBI" id="CHEBI:59776"/>
        <dbReference type="EC" id="2.2.1.2"/>
    </reaction>
</comment>
<comment type="pathway">
    <text evidence="1">Carbohydrate degradation; pentose phosphate pathway; D-glyceraldehyde 3-phosphate and beta-D-fructose 6-phosphate from D-ribose 5-phosphate and D-xylulose 5-phosphate (non-oxidative stage): step 2/3.</text>
</comment>
<comment type="subcellular location">
    <subcellularLocation>
        <location evidence="1">Cytoplasm</location>
    </subcellularLocation>
</comment>
<comment type="similarity">
    <text evidence="1">Belongs to the transaldolase family. Type 3B subfamily.</text>
</comment>
<evidence type="ECO:0000255" key="1">
    <source>
        <dbReference type="HAMAP-Rule" id="MF_00494"/>
    </source>
</evidence>
<reference key="1">
    <citation type="submission" date="2007-11" db="EMBL/GenBank/DDBJ databases">
        <title>Complete genome sequence of Clostridium phytofermentans ISDg.</title>
        <authorList>
            <person name="Leschine S.B."/>
            <person name="Warnick T.A."/>
            <person name="Blanchard J.L."/>
            <person name="Schnell D.J."/>
            <person name="Petit E.L."/>
            <person name="LaTouf W.G."/>
            <person name="Copeland A."/>
            <person name="Lucas S."/>
            <person name="Lapidus A."/>
            <person name="Barry K."/>
            <person name="Glavina del Rio T."/>
            <person name="Dalin E."/>
            <person name="Tice H."/>
            <person name="Pitluck S."/>
            <person name="Kiss H."/>
            <person name="Brettin T."/>
            <person name="Bruce D."/>
            <person name="Detter J.C."/>
            <person name="Han C."/>
            <person name="Kuske C."/>
            <person name="Schmutz J."/>
            <person name="Larimer F."/>
            <person name="Land M."/>
            <person name="Hauser L."/>
            <person name="Kyrpides N."/>
            <person name="Kim E.A."/>
            <person name="Richardson P."/>
        </authorList>
    </citation>
    <scope>NUCLEOTIDE SEQUENCE [LARGE SCALE GENOMIC DNA]</scope>
    <source>
        <strain>ATCC 700394 / DSM 18823 / ISDg</strain>
    </source>
</reference>
<feature type="chain" id="PRO_1000126301" description="Probable transaldolase">
    <location>
        <begin position="1"/>
        <end position="217"/>
    </location>
</feature>
<feature type="active site" description="Schiff-base intermediate with substrate" evidence="1">
    <location>
        <position position="85"/>
    </location>
</feature>
<organism>
    <name type="scientific">Lachnoclostridium phytofermentans (strain ATCC 700394 / DSM 18823 / ISDg)</name>
    <name type="common">Clostridium phytofermentans</name>
    <dbReference type="NCBI Taxonomy" id="357809"/>
    <lineage>
        <taxon>Bacteria</taxon>
        <taxon>Bacillati</taxon>
        <taxon>Bacillota</taxon>
        <taxon>Clostridia</taxon>
        <taxon>Lachnospirales</taxon>
        <taxon>Lachnospiraceae</taxon>
    </lineage>
</organism>
<protein>
    <recommendedName>
        <fullName evidence="1">Probable transaldolase</fullName>
        <ecNumber evidence="1">2.2.1.2</ecNumber>
    </recommendedName>
</protein>
<keyword id="KW-0963">Cytoplasm</keyword>
<keyword id="KW-0570">Pentose shunt</keyword>
<keyword id="KW-1185">Reference proteome</keyword>
<keyword id="KW-0704">Schiff base</keyword>
<keyword id="KW-0808">Transferase</keyword>
<gene>
    <name evidence="1" type="primary">tal</name>
    <name type="ordered locus">Cphy_0013</name>
</gene>
<sequence>MKFFIDTANVEEIKKANDMGVICGVTTNPSLIAKEGRDFKEVITEITNIVDGPISGEVKATTEDAESMIKEGREIAKIHPNMVVKIPMTVEGLKATKVLSQEGIKTNVTLVFSANQALLAARAGATYVSPFLGRLDDISTPGIDLIRTISDIFEIYNLPTEIIAASVRNPVHITDCALAGAHIATVPYSVIVQCTKHPLTDAGIEKFKADYRAVFGE</sequence>
<accession>A9KPQ3</accession>
<dbReference type="EC" id="2.2.1.2" evidence="1"/>
<dbReference type="EMBL" id="CP000885">
    <property type="protein sequence ID" value="ABX40404.1"/>
    <property type="molecule type" value="Genomic_DNA"/>
</dbReference>
<dbReference type="RefSeq" id="WP_012198047.1">
    <property type="nucleotide sequence ID" value="NC_010001.1"/>
</dbReference>
<dbReference type="SMR" id="A9KPQ3"/>
<dbReference type="STRING" id="357809.Cphy_0013"/>
<dbReference type="KEGG" id="cpy:Cphy_0013"/>
<dbReference type="eggNOG" id="COG0176">
    <property type="taxonomic scope" value="Bacteria"/>
</dbReference>
<dbReference type="HOGENOM" id="CLU_079764_0_0_9"/>
<dbReference type="OrthoDB" id="9807051at2"/>
<dbReference type="UniPathway" id="UPA00115">
    <property type="reaction ID" value="UER00414"/>
</dbReference>
<dbReference type="Proteomes" id="UP000000370">
    <property type="component" value="Chromosome"/>
</dbReference>
<dbReference type="GO" id="GO:0005737">
    <property type="term" value="C:cytoplasm"/>
    <property type="evidence" value="ECO:0007669"/>
    <property type="project" value="UniProtKB-SubCell"/>
</dbReference>
<dbReference type="GO" id="GO:0016832">
    <property type="term" value="F:aldehyde-lyase activity"/>
    <property type="evidence" value="ECO:0007669"/>
    <property type="project" value="InterPro"/>
</dbReference>
<dbReference type="GO" id="GO:0004801">
    <property type="term" value="F:transaldolase activity"/>
    <property type="evidence" value="ECO:0007669"/>
    <property type="project" value="UniProtKB-UniRule"/>
</dbReference>
<dbReference type="GO" id="GO:0005975">
    <property type="term" value="P:carbohydrate metabolic process"/>
    <property type="evidence" value="ECO:0007669"/>
    <property type="project" value="InterPro"/>
</dbReference>
<dbReference type="GO" id="GO:0006098">
    <property type="term" value="P:pentose-phosphate shunt"/>
    <property type="evidence" value="ECO:0007669"/>
    <property type="project" value="UniProtKB-UniRule"/>
</dbReference>
<dbReference type="CDD" id="cd00956">
    <property type="entry name" value="Transaldolase_FSA"/>
    <property type="match status" value="1"/>
</dbReference>
<dbReference type="FunFam" id="3.20.20.70:FF:000018">
    <property type="entry name" value="Probable transaldolase"/>
    <property type="match status" value="1"/>
</dbReference>
<dbReference type="Gene3D" id="3.20.20.70">
    <property type="entry name" value="Aldolase class I"/>
    <property type="match status" value="1"/>
</dbReference>
<dbReference type="HAMAP" id="MF_00494">
    <property type="entry name" value="Transaldolase_3b"/>
    <property type="match status" value="1"/>
</dbReference>
<dbReference type="InterPro" id="IPR013785">
    <property type="entry name" value="Aldolase_TIM"/>
</dbReference>
<dbReference type="InterPro" id="IPR001585">
    <property type="entry name" value="TAL/FSA"/>
</dbReference>
<dbReference type="InterPro" id="IPR022999">
    <property type="entry name" value="Transaldolase_3B"/>
</dbReference>
<dbReference type="InterPro" id="IPR004731">
    <property type="entry name" value="Transaldolase_3B/F6P_aldolase"/>
</dbReference>
<dbReference type="InterPro" id="IPR018225">
    <property type="entry name" value="Transaldolase_AS"/>
</dbReference>
<dbReference type="InterPro" id="IPR033919">
    <property type="entry name" value="TSA/FSA_arc/bac"/>
</dbReference>
<dbReference type="NCBIfam" id="TIGR00875">
    <property type="entry name" value="fsa_talC_mipB"/>
    <property type="match status" value="1"/>
</dbReference>
<dbReference type="PANTHER" id="PTHR10683">
    <property type="entry name" value="TRANSALDOLASE"/>
    <property type="match status" value="1"/>
</dbReference>
<dbReference type="PANTHER" id="PTHR10683:SF36">
    <property type="entry name" value="TRANSALDOLASE"/>
    <property type="match status" value="1"/>
</dbReference>
<dbReference type="Pfam" id="PF00923">
    <property type="entry name" value="TAL_FSA"/>
    <property type="match status" value="1"/>
</dbReference>
<dbReference type="SUPFAM" id="SSF51569">
    <property type="entry name" value="Aldolase"/>
    <property type="match status" value="1"/>
</dbReference>
<dbReference type="PROSITE" id="PS01054">
    <property type="entry name" value="TRANSALDOLASE_1"/>
    <property type="match status" value="1"/>
</dbReference>
<dbReference type="PROSITE" id="PS00958">
    <property type="entry name" value="TRANSALDOLASE_2"/>
    <property type="match status" value="1"/>
</dbReference>
<proteinExistence type="inferred from homology"/>